<sequence length="399" mass="43875">MAVTMLQDWCRWMGVNARRGLLILGIPEDCDDAEFQESLEAALRPMGHFTVLGKAFREEDNATAALVELDREVNYALVPREIPGTGGPWNVVFVPRCSGEEFLGLGRVFHFPEQEGQMVESVAGALGVGLRRVCWLRSIGQAVQPWVEAVRCQSLGVFSGRDQPAPGEESFEVWLDHTTEMLHVWQGVSERERRRRLLEGLRGTALQLVHALLAENPARTAQDCLAALAQVFGDNESQATIRVKCLTAQQQSGERLSAFVLRLEVLLQKAMEKEALARASADRVRLRQMLTRAHLTEPLDEALRKLRMAGRSPSFLEMLGLVRESEAWEASLARSVRAQTQEGAGARAGAQAVARASTKVEAVPGGPGREPEGLLQAGGQEAEELLQEGLKPVLEECDN</sequence>
<gene>
    <name evidence="3" type="primary">PNMA6A</name>
    <name evidence="3" type="synonym">PNMA6C</name>
</gene>
<organism>
    <name type="scientific">Homo sapiens</name>
    <name type="common">Human</name>
    <dbReference type="NCBI Taxonomy" id="9606"/>
    <lineage>
        <taxon>Eukaryota</taxon>
        <taxon>Metazoa</taxon>
        <taxon>Chordata</taxon>
        <taxon>Craniata</taxon>
        <taxon>Vertebrata</taxon>
        <taxon>Euteleostomi</taxon>
        <taxon>Mammalia</taxon>
        <taxon>Eutheria</taxon>
        <taxon>Euarchontoglires</taxon>
        <taxon>Primates</taxon>
        <taxon>Haplorrhini</taxon>
        <taxon>Catarrhini</taxon>
        <taxon>Hominidae</taxon>
        <taxon>Homo</taxon>
    </lineage>
</organism>
<protein>
    <recommendedName>
        <fullName evidence="2">Paraneoplastic antigen-like protein 6A</fullName>
    </recommendedName>
</protein>
<proteinExistence type="evidence at protein level"/>
<reference key="1">
    <citation type="journal article" date="2004" name="Nat. Genet.">
        <title>Complete sequencing and characterization of 21,243 full-length human cDNAs.</title>
        <authorList>
            <person name="Ota T."/>
            <person name="Suzuki Y."/>
            <person name="Nishikawa T."/>
            <person name="Otsuki T."/>
            <person name="Sugiyama T."/>
            <person name="Irie R."/>
            <person name="Wakamatsu A."/>
            <person name="Hayashi K."/>
            <person name="Sato H."/>
            <person name="Nagai K."/>
            <person name="Kimura K."/>
            <person name="Makita H."/>
            <person name="Sekine M."/>
            <person name="Obayashi M."/>
            <person name="Nishi T."/>
            <person name="Shibahara T."/>
            <person name="Tanaka T."/>
            <person name="Ishii S."/>
            <person name="Yamamoto J."/>
            <person name="Saito K."/>
            <person name="Kawai Y."/>
            <person name="Isono Y."/>
            <person name="Nakamura Y."/>
            <person name="Nagahari K."/>
            <person name="Murakami K."/>
            <person name="Yasuda T."/>
            <person name="Iwayanagi T."/>
            <person name="Wagatsuma M."/>
            <person name="Shiratori A."/>
            <person name="Sudo H."/>
            <person name="Hosoiri T."/>
            <person name="Kaku Y."/>
            <person name="Kodaira H."/>
            <person name="Kondo H."/>
            <person name="Sugawara M."/>
            <person name="Takahashi M."/>
            <person name="Kanda K."/>
            <person name="Yokoi T."/>
            <person name="Furuya T."/>
            <person name="Kikkawa E."/>
            <person name="Omura Y."/>
            <person name="Abe K."/>
            <person name="Kamihara K."/>
            <person name="Katsuta N."/>
            <person name="Sato K."/>
            <person name="Tanikawa M."/>
            <person name="Yamazaki M."/>
            <person name="Ninomiya K."/>
            <person name="Ishibashi T."/>
            <person name="Yamashita H."/>
            <person name="Murakawa K."/>
            <person name="Fujimori K."/>
            <person name="Tanai H."/>
            <person name="Kimata M."/>
            <person name="Watanabe M."/>
            <person name="Hiraoka S."/>
            <person name="Chiba Y."/>
            <person name="Ishida S."/>
            <person name="Ono Y."/>
            <person name="Takiguchi S."/>
            <person name="Watanabe S."/>
            <person name="Yosida M."/>
            <person name="Hotuta T."/>
            <person name="Kusano J."/>
            <person name="Kanehori K."/>
            <person name="Takahashi-Fujii A."/>
            <person name="Hara H."/>
            <person name="Tanase T.-O."/>
            <person name="Nomura Y."/>
            <person name="Togiya S."/>
            <person name="Komai F."/>
            <person name="Hara R."/>
            <person name="Takeuchi K."/>
            <person name="Arita M."/>
            <person name="Imose N."/>
            <person name="Musashino K."/>
            <person name="Yuuki H."/>
            <person name="Oshima A."/>
            <person name="Sasaki N."/>
            <person name="Aotsuka S."/>
            <person name="Yoshikawa Y."/>
            <person name="Matsunawa H."/>
            <person name="Ichihara T."/>
            <person name="Shiohata N."/>
            <person name="Sano S."/>
            <person name="Moriya S."/>
            <person name="Momiyama H."/>
            <person name="Satoh N."/>
            <person name="Takami S."/>
            <person name="Terashima Y."/>
            <person name="Suzuki O."/>
            <person name="Nakagawa S."/>
            <person name="Senoh A."/>
            <person name="Mizoguchi H."/>
            <person name="Goto Y."/>
            <person name="Shimizu F."/>
            <person name="Wakebe H."/>
            <person name="Hishigaki H."/>
            <person name="Watanabe T."/>
            <person name="Sugiyama A."/>
            <person name="Takemoto M."/>
            <person name="Kawakami B."/>
            <person name="Yamazaki M."/>
            <person name="Watanabe K."/>
            <person name="Kumagai A."/>
            <person name="Itakura S."/>
            <person name="Fukuzumi Y."/>
            <person name="Fujimori Y."/>
            <person name="Komiyama M."/>
            <person name="Tashiro H."/>
            <person name="Tanigami A."/>
            <person name="Fujiwara T."/>
            <person name="Ono T."/>
            <person name="Yamada K."/>
            <person name="Fujii Y."/>
            <person name="Ozaki K."/>
            <person name="Hirao M."/>
            <person name="Ohmori Y."/>
            <person name="Kawabata A."/>
            <person name="Hikiji T."/>
            <person name="Kobatake N."/>
            <person name="Inagaki H."/>
            <person name="Ikema Y."/>
            <person name="Okamoto S."/>
            <person name="Okitani R."/>
            <person name="Kawakami T."/>
            <person name="Noguchi S."/>
            <person name="Itoh T."/>
            <person name="Shigeta K."/>
            <person name="Senba T."/>
            <person name="Matsumura K."/>
            <person name="Nakajima Y."/>
            <person name="Mizuno T."/>
            <person name="Morinaga M."/>
            <person name="Sasaki M."/>
            <person name="Togashi T."/>
            <person name="Oyama M."/>
            <person name="Hata H."/>
            <person name="Watanabe M."/>
            <person name="Komatsu T."/>
            <person name="Mizushima-Sugano J."/>
            <person name="Satoh T."/>
            <person name="Shirai Y."/>
            <person name="Takahashi Y."/>
            <person name="Nakagawa K."/>
            <person name="Okumura K."/>
            <person name="Nagase T."/>
            <person name="Nomura N."/>
            <person name="Kikuchi H."/>
            <person name="Masuho Y."/>
            <person name="Yamashita R."/>
            <person name="Nakai K."/>
            <person name="Yada T."/>
            <person name="Nakamura Y."/>
            <person name="Ohara O."/>
            <person name="Isogai T."/>
            <person name="Sugano S."/>
        </authorList>
    </citation>
    <scope>NUCLEOTIDE SEQUENCE [LARGE SCALE MRNA]</scope>
    <source>
        <tissue>Brain</tissue>
        <tissue>Caudate nucleus</tissue>
    </source>
</reference>
<reference key="2">
    <citation type="journal article" date="2005" name="Nature">
        <title>The DNA sequence of the human X chromosome.</title>
        <authorList>
            <person name="Ross M.T."/>
            <person name="Grafham D.V."/>
            <person name="Coffey A.J."/>
            <person name="Scherer S."/>
            <person name="McLay K."/>
            <person name="Muzny D."/>
            <person name="Platzer M."/>
            <person name="Howell G.R."/>
            <person name="Burrows C."/>
            <person name="Bird C.P."/>
            <person name="Frankish A."/>
            <person name="Lovell F.L."/>
            <person name="Howe K.L."/>
            <person name="Ashurst J.L."/>
            <person name="Fulton R.S."/>
            <person name="Sudbrak R."/>
            <person name="Wen G."/>
            <person name="Jones M.C."/>
            <person name="Hurles M.E."/>
            <person name="Andrews T.D."/>
            <person name="Scott C.E."/>
            <person name="Searle S."/>
            <person name="Ramser J."/>
            <person name="Whittaker A."/>
            <person name="Deadman R."/>
            <person name="Carter N.P."/>
            <person name="Hunt S.E."/>
            <person name="Chen R."/>
            <person name="Cree A."/>
            <person name="Gunaratne P."/>
            <person name="Havlak P."/>
            <person name="Hodgson A."/>
            <person name="Metzker M.L."/>
            <person name="Richards S."/>
            <person name="Scott G."/>
            <person name="Steffen D."/>
            <person name="Sodergren E."/>
            <person name="Wheeler D.A."/>
            <person name="Worley K.C."/>
            <person name="Ainscough R."/>
            <person name="Ambrose K.D."/>
            <person name="Ansari-Lari M.A."/>
            <person name="Aradhya S."/>
            <person name="Ashwell R.I."/>
            <person name="Babbage A.K."/>
            <person name="Bagguley C.L."/>
            <person name="Ballabio A."/>
            <person name="Banerjee R."/>
            <person name="Barker G.E."/>
            <person name="Barlow K.F."/>
            <person name="Barrett I.P."/>
            <person name="Bates K.N."/>
            <person name="Beare D.M."/>
            <person name="Beasley H."/>
            <person name="Beasley O."/>
            <person name="Beck A."/>
            <person name="Bethel G."/>
            <person name="Blechschmidt K."/>
            <person name="Brady N."/>
            <person name="Bray-Allen S."/>
            <person name="Bridgeman A.M."/>
            <person name="Brown A.J."/>
            <person name="Brown M.J."/>
            <person name="Bonnin D."/>
            <person name="Bruford E.A."/>
            <person name="Buhay C."/>
            <person name="Burch P."/>
            <person name="Burford D."/>
            <person name="Burgess J."/>
            <person name="Burrill W."/>
            <person name="Burton J."/>
            <person name="Bye J.M."/>
            <person name="Carder C."/>
            <person name="Carrel L."/>
            <person name="Chako J."/>
            <person name="Chapman J.C."/>
            <person name="Chavez D."/>
            <person name="Chen E."/>
            <person name="Chen G."/>
            <person name="Chen Y."/>
            <person name="Chen Z."/>
            <person name="Chinault C."/>
            <person name="Ciccodicola A."/>
            <person name="Clark S.Y."/>
            <person name="Clarke G."/>
            <person name="Clee C.M."/>
            <person name="Clegg S."/>
            <person name="Clerc-Blankenburg K."/>
            <person name="Clifford K."/>
            <person name="Cobley V."/>
            <person name="Cole C.G."/>
            <person name="Conquer J.S."/>
            <person name="Corby N."/>
            <person name="Connor R.E."/>
            <person name="David R."/>
            <person name="Davies J."/>
            <person name="Davis C."/>
            <person name="Davis J."/>
            <person name="Delgado O."/>
            <person name="Deshazo D."/>
            <person name="Dhami P."/>
            <person name="Ding Y."/>
            <person name="Dinh H."/>
            <person name="Dodsworth S."/>
            <person name="Draper H."/>
            <person name="Dugan-Rocha S."/>
            <person name="Dunham A."/>
            <person name="Dunn M."/>
            <person name="Durbin K.J."/>
            <person name="Dutta I."/>
            <person name="Eades T."/>
            <person name="Ellwood M."/>
            <person name="Emery-Cohen A."/>
            <person name="Errington H."/>
            <person name="Evans K.L."/>
            <person name="Faulkner L."/>
            <person name="Francis F."/>
            <person name="Frankland J."/>
            <person name="Fraser A.E."/>
            <person name="Galgoczy P."/>
            <person name="Gilbert J."/>
            <person name="Gill R."/>
            <person name="Gloeckner G."/>
            <person name="Gregory S.G."/>
            <person name="Gribble S."/>
            <person name="Griffiths C."/>
            <person name="Grocock R."/>
            <person name="Gu Y."/>
            <person name="Gwilliam R."/>
            <person name="Hamilton C."/>
            <person name="Hart E.A."/>
            <person name="Hawes A."/>
            <person name="Heath P.D."/>
            <person name="Heitmann K."/>
            <person name="Hennig S."/>
            <person name="Hernandez J."/>
            <person name="Hinzmann B."/>
            <person name="Ho S."/>
            <person name="Hoffs M."/>
            <person name="Howden P.J."/>
            <person name="Huckle E.J."/>
            <person name="Hume J."/>
            <person name="Hunt P.J."/>
            <person name="Hunt A.R."/>
            <person name="Isherwood J."/>
            <person name="Jacob L."/>
            <person name="Johnson D."/>
            <person name="Jones S."/>
            <person name="de Jong P.J."/>
            <person name="Joseph S.S."/>
            <person name="Keenan S."/>
            <person name="Kelly S."/>
            <person name="Kershaw J.K."/>
            <person name="Khan Z."/>
            <person name="Kioschis P."/>
            <person name="Klages S."/>
            <person name="Knights A.J."/>
            <person name="Kosiura A."/>
            <person name="Kovar-Smith C."/>
            <person name="Laird G.K."/>
            <person name="Langford C."/>
            <person name="Lawlor S."/>
            <person name="Leversha M."/>
            <person name="Lewis L."/>
            <person name="Liu W."/>
            <person name="Lloyd C."/>
            <person name="Lloyd D.M."/>
            <person name="Loulseged H."/>
            <person name="Loveland J.E."/>
            <person name="Lovell J.D."/>
            <person name="Lozado R."/>
            <person name="Lu J."/>
            <person name="Lyne R."/>
            <person name="Ma J."/>
            <person name="Maheshwari M."/>
            <person name="Matthews L.H."/>
            <person name="McDowall J."/>
            <person name="McLaren S."/>
            <person name="McMurray A."/>
            <person name="Meidl P."/>
            <person name="Meitinger T."/>
            <person name="Milne S."/>
            <person name="Miner G."/>
            <person name="Mistry S.L."/>
            <person name="Morgan M."/>
            <person name="Morris S."/>
            <person name="Mueller I."/>
            <person name="Mullikin J.C."/>
            <person name="Nguyen N."/>
            <person name="Nordsiek G."/>
            <person name="Nyakatura G."/>
            <person name="O'dell C.N."/>
            <person name="Okwuonu G."/>
            <person name="Palmer S."/>
            <person name="Pandian R."/>
            <person name="Parker D."/>
            <person name="Parrish J."/>
            <person name="Pasternak S."/>
            <person name="Patel D."/>
            <person name="Pearce A.V."/>
            <person name="Pearson D.M."/>
            <person name="Pelan S.E."/>
            <person name="Perez L."/>
            <person name="Porter K.M."/>
            <person name="Ramsey Y."/>
            <person name="Reichwald K."/>
            <person name="Rhodes S."/>
            <person name="Ridler K.A."/>
            <person name="Schlessinger D."/>
            <person name="Schueler M.G."/>
            <person name="Sehra H.K."/>
            <person name="Shaw-Smith C."/>
            <person name="Shen H."/>
            <person name="Sheridan E.M."/>
            <person name="Shownkeen R."/>
            <person name="Skuce C.D."/>
            <person name="Smith M.L."/>
            <person name="Sotheran E.C."/>
            <person name="Steingruber H.E."/>
            <person name="Steward C.A."/>
            <person name="Storey R."/>
            <person name="Swann R.M."/>
            <person name="Swarbreck D."/>
            <person name="Tabor P.E."/>
            <person name="Taudien S."/>
            <person name="Taylor T."/>
            <person name="Teague B."/>
            <person name="Thomas K."/>
            <person name="Thorpe A."/>
            <person name="Timms K."/>
            <person name="Tracey A."/>
            <person name="Trevanion S."/>
            <person name="Tromans A.C."/>
            <person name="d'Urso M."/>
            <person name="Verduzco D."/>
            <person name="Villasana D."/>
            <person name="Waldron L."/>
            <person name="Wall M."/>
            <person name="Wang Q."/>
            <person name="Warren J."/>
            <person name="Warry G.L."/>
            <person name="Wei X."/>
            <person name="West A."/>
            <person name="Whitehead S.L."/>
            <person name="Whiteley M.N."/>
            <person name="Wilkinson J.E."/>
            <person name="Willey D.L."/>
            <person name="Williams G."/>
            <person name="Williams L."/>
            <person name="Williamson A."/>
            <person name="Williamson H."/>
            <person name="Wilming L."/>
            <person name="Woodmansey R.L."/>
            <person name="Wray P.W."/>
            <person name="Yen J."/>
            <person name="Zhang J."/>
            <person name="Zhou J."/>
            <person name="Zoghbi H."/>
            <person name="Zorilla S."/>
            <person name="Buck D."/>
            <person name="Reinhardt R."/>
            <person name="Poustka A."/>
            <person name="Rosenthal A."/>
            <person name="Lehrach H."/>
            <person name="Meindl A."/>
            <person name="Minx P.J."/>
            <person name="Hillier L.W."/>
            <person name="Willard H.F."/>
            <person name="Wilson R.K."/>
            <person name="Waterston R.H."/>
            <person name="Rice C.M."/>
            <person name="Vaudin M."/>
            <person name="Coulson A."/>
            <person name="Nelson D.L."/>
            <person name="Weinstock G."/>
            <person name="Sulston J.E."/>
            <person name="Durbin R.M."/>
            <person name="Hubbard T."/>
            <person name="Gibbs R.A."/>
            <person name="Beck S."/>
            <person name="Rogers J."/>
            <person name="Bentley D.R."/>
        </authorList>
    </citation>
    <scope>NUCLEOTIDE SEQUENCE [LARGE SCALE GENOMIC DNA]</scope>
</reference>
<reference key="3">
    <citation type="submission" date="2005-09" db="EMBL/GenBank/DDBJ databases">
        <authorList>
            <person name="Mural R.J."/>
            <person name="Istrail S."/>
            <person name="Sutton G.G."/>
            <person name="Florea L."/>
            <person name="Halpern A.L."/>
            <person name="Mobarry C.M."/>
            <person name="Lippert R."/>
            <person name="Walenz B."/>
            <person name="Shatkay H."/>
            <person name="Dew I."/>
            <person name="Miller J.R."/>
            <person name="Flanigan M.J."/>
            <person name="Edwards N.J."/>
            <person name="Bolanos R."/>
            <person name="Fasulo D."/>
            <person name="Halldorsson B.V."/>
            <person name="Hannenhalli S."/>
            <person name="Turner R."/>
            <person name="Yooseph S."/>
            <person name="Lu F."/>
            <person name="Nusskern D.R."/>
            <person name="Shue B.C."/>
            <person name="Zheng X.H."/>
            <person name="Zhong F."/>
            <person name="Delcher A.L."/>
            <person name="Huson D.H."/>
            <person name="Kravitz S.A."/>
            <person name="Mouchard L."/>
            <person name="Reinert K."/>
            <person name="Remington K.A."/>
            <person name="Clark A.G."/>
            <person name="Waterman M.S."/>
            <person name="Eichler E.E."/>
            <person name="Adams M.D."/>
            <person name="Hunkapiller M.W."/>
            <person name="Myers E.W."/>
            <person name="Venter J.C."/>
        </authorList>
    </citation>
    <scope>NUCLEOTIDE SEQUENCE [LARGE SCALE GENOMIC DNA]</scope>
</reference>
<reference key="4">
    <citation type="journal article" date="2004" name="Genome Res.">
        <title>The status, quality, and expansion of the NIH full-length cDNA project: the Mammalian Gene Collection (MGC).</title>
        <authorList>
            <consortium name="The MGC Project Team"/>
        </authorList>
    </citation>
    <scope>NUCLEOTIDE SEQUENCE [LARGE SCALE MRNA]</scope>
    <source>
        <tissue>Kidney</tissue>
    </source>
</reference>
<reference key="5">
    <citation type="journal article" date="2009" name="Cereb. Cortex">
        <title>Paraneoplastic antigen-like 5 gene (PNMA5) is preferentially expressed in the association areas in a primate specific manner.</title>
        <authorList>
            <person name="Takaji M."/>
            <person name="Komatsu Y."/>
            <person name="Watakabe A."/>
            <person name="Hashikawa T."/>
            <person name="Yamamori T."/>
        </authorList>
    </citation>
    <scope>TISSUE SPECIFICITY</scope>
</reference>
<evidence type="ECO:0000269" key="1">
    <source>
    </source>
</evidence>
<evidence type="ECO:0000305" key="2"/>
<evidence type="ECO:0000312" key="3">
    <source>
        <dbReference type="HGNC" id="HGNC:28248"/>
    </source>
</evidence>
<name>PNM6A_HUMAN</name>
<dbReference type="EMBL" id="AK055322">
    <property type="protein sequence ID" value="BAB70902.1"/>
    <property type="molecule type" value="mRNA"/>
</dbReference>
<dbReference type="EMBL" id="AK289879">
    <property type="protein sequence ID" value="BAF82568.1"/>
    <property type="molecule type" value="mRNA"/>
</dbReference>
<dbReference type="EMBL" id="AC243374">
    <property type="status" value="NOT_ANNOTATED_CDS"/>
    <property type="molecule type" value="Genomic_DNA"/>
</dbReference>
<dbReference type="EMBL" id="AC243428">
    <property type="status" value="NOT_ANNOTATED_CDS"/>
    <property type="molecule type" value="Genomic_DNA"/>
</dbReference>
<dbReference type="EMBL" id="CH471172">
    <property type="protein sequence ID" value="EAW72886.1"/>
    <property type="molecule type" value="Genomic_DNA"/>
</dbReference>
<dbReference type="EMBL" id="CH471172">
    <property type="protein sequence ID" value="EAW72887.1"/>
    <property type="molecule type" value="Genomic_DNA"/>
</dbReference>
<dbReference type="EMBL" id="BC007631">
    <property type="protein sequence ID" value="AAH07631.1"/>
    <property type="molecule type" value="mRNA"/>
</dbReference>
<dbReference type="CCDS" id="CCDS14719.1"/>
<dbReference type="RefSeq" id="NP_116271.3">
    <property type="nucleotide sequence ID" value="NM_032882.6"/>
</dbReference>
<dbReference type="SMR" id="P0CW24"/>
<dbReference type="BioGRID" id="124398">
    <property type="interactions" value="31"/>
</dbReference>
<dbReference type="FunCoup" id="P0CW24">
    <property type="interactions" value="16"/>
</dbReference>
<dbReference type="IntAct" id="P0CW24">
    <property type="interactions" value="25"/>
</dbReference>
<dbReference type="STRING" id="9606.ENSP00000391488"/>
<dbReference type="GlyGen" id="P0CW24">
    <property type="glycosylation" value="1 site, 1 O-linked glycan (1 site)"/>
</dbReference>
<dbReference type="iPTMnet" id="P0CW24"/>
<dbReference type="PhosphoSitePlus" id="P0CW24"/>
<dbReference type="BioMuta" id="PNMA6A"/>
<dbReference type="DMDM" id="342165258"/>
<dbReference type="jPOST" id="P0CW24"/>
<dbReference type="MassIVE" id="P0CW24"/>
<dbReference type="PaxDb" id="9606-ENSP00000391488"/>
<dbReference type="PeptideAtlas" id="P0CW24"/>
<dbReference type="Antibodypedia" id="72662">
    <property type="antibodies" value="71 antibodies from 13 providers"/>
</dbReference>
<dbReference type="DNASU" id="84968"/>
<dbReference type="Ensembl" id="ENST00000421798.5">
    <property type="protein sequence ID" value="ENSP00000391488.3"/>
    <property type="gene ID" value="ENSG00000235961.6"/>
</dbReference>
<dbReference type="GeneID" id="84968"/>
<dbReference type="KEGG" id="hsa:84968"/>
<dbReference type="MANE-Select" id="ENST00000421798.5">
    <property type="protein sequence ID" value="ENSP00000391488.3"/>
    <property type="RefSeq nucleotide sequence ID" value="NM_032882.6"/>
    <property type="RefSeq protein sequence ID" value="NP_116271.3"/>
</dbReference>
<dbReference type="AGR" id="HGNC:28248"/>
<dbReference type="CTD" id="84968"/>
<dbReference type="DisGeNET" id="84968"/>
<dbReference type="GeneCards" id="PNMA6A"/>
<dbReference type="HGNC" id="HGNC:28248">
    <property type="gene designation" value="PNMA6A"/>
</dbReference>
<dbReference type="HPA" id="ENSG00000235961">
    <property type="expression patterns" value="Tissue enhanced (brain)"/>
</dbReference>
<dbReference type="MIM" id="300917">
    <property type="type" value="gene"/>
</dbReference>
<dbReference type="neXtProt" id="NX_P0CW24"/>
<dbReference type="OpenTargets" id="ENSG00000235961"/>
<dbReference type="VEuPathDB" id="HostDB:ENSG00000235961"/>
<dbReference type="eggNOG" id="KOG3544">
    <property type="taxonomic scope" value="Eukaryota"/>
</dbReference>
<dbReference type="GeneTree" id="ENSGT01030000234522"/>
<dbReference type="InParanoid" id="P0CW24"/>
<dbReference type="OMA" id="WVETMRY"/>
<dbReference type="OrthoDB" id="115435at2759"/>
<dbReference type="PAN-GO" id="P0CW24">
    <property type="GO annotations" value="0 GO annotations based on evolutionary models"/>
</dbReference>
<dbReference type="PhylomeDB" id="P0CW24"/>
<dbReference type="TreeFam" id="TF335054"/>
<dbReference type="PathwayCommons" id="P0CW24"/>
<dbReference type="SignaLink" id="P0CW24"/>
<dbReference type="BioGRID-ORCS" id="84968">
    <property type="hits" value="55 hits in 642 CRISPR screens"/>
</dbReference>
<dbReference type="GenomeRNAi" id="84968"/>
<dbReference type="Pharos" id="P0CW24">
    <property type="development level" value="Tbio"/>
</dbReference>
<dbReference type="PRO" id="PR:P0CW24"/>
<dbReference type="Proteomes" id="UP000005640">
    <property type="component" value="Chromosome X"/>
</dbReference>
<dbReference type="RNAct" id="P0CW24">
    <property type="molecule type" value="protein"/>
</dbReference>
<dbReference type="Bgee" id="ENSG00000235961">
    <property type="expression patterns" value="Expressed in endothelial cell and 136 other cell types or tissues"/>
</dbReference>
<dbReference type="InterPro" id="IPR026523">
    <property type="entry name" value="PNMA"/>
</dbReference>
<dbReference type="InterPro" id="IPR048270">
    <property type="entry name" value="PNMA_C"/>
</dbReference>
<dbReference type="InterPro" id="IPR048271">
    <property type="entry name" value="PNMA_N"/>
</dbReference>
<dbReference type="PANTHER" id="PTHR23095">
    <property type="entry name" value="PARANEOPLASTIC ANTIGEN"/>
    <property type="match status" value="1"/>
</dbReference>
<dbReference type="PANTHER" id="PTHR23095:SF40">
    <property type="entry name" value="PARANEOPLASTIC ANTIGEN-LIKE PROTEIN 6A"/>
    <property type="match status" value="1"/>
</dbReference>
<dbReference type="Pfam" id="PF14893">
    <property type="entry name" value="PNMA"/>
    <property type="match status" value="1"/>
</dbReference>
<dbReference type="Pfam" id="PF20846">
    <property type="entry name" value="PNMA_N"/>
    <property type="match status" value="1"/>
</dbReference>
<feature type="chain" id="PRO_0000311219" description="Paraneoplastic antigen-like protein 6A">
    <location>
        <begin position="1"/>
        <end position="399"/>
    </location>
</feature>
<accession>P0CW24</accession>
<accession>A8K1G4</accession>
<accession>D3DWT8</accession>
<accession>P0CW26</accession>
<accession>Q96A40</accession>
<keyword id="KW-1267">Proteomics identification</keyword>
<keyword id="KW-1185">Reference proteome</keyword>
<comment type="interaction">
    <interactant intactId="EBI-721270">
        <id>P0CW24</id>
    </interactant>
    <interactant intactId="EBI-742909">
        <id>Q9H6L4</id>
        <label>ARMC7</label>
    </interactant>
    <organismsDiffer>false</organismsDiffer>
    <experiments>3</experiments>
</comment>
<comment type="interaction">
    <interactant intactId="EBI-721270">
        <id>P0CW24</id>
    </interactant>
    <interactant intactId="EBI-10261970">
        <id>Q8IW40</id>
        <label>CCDC103</label>
    </interactant>
    <organismsDiffer>false</organismsDiffer>
    <experiments>3</experiments>
</comment>
<comment type="interaction">
    <interactant intactId="EBI-721270">
        <id>P0CW24</id>
    </interactant>
    <interactant intactId="EBI-748171">
        <id>O43186</id>
        <label>CRX</label>
    </interactant>
    <organismsDiffer>false</organismsDiffer>
    <experiments>3</experiments>
</comment>
<comment type="interaction">
    <interactant intactId="EBI-721270">
        <id>P0CW24</id>
    </interactant>
    <interactant intactId="EBI-302345">
        <id>Q8ND90</id>
        <label>PNMA1</label>
    </interactant>
    <organismsDiffer>false</organismsDiffer>
    <experiments>10</experiments>
</comment>
<comment type="tissue specificity">
    <text evidence="1">Expressed in the brain.</text>
</comment>
<comment type="similarity">
    <text evidence="2">Belongs to the PNMA family.</text>
</comment>